<name>BRAA_ANNTR</name>
<comment type="function">
    <text evidence="3">Terpene cyclase; part of the gene cluster that mediates the biosynthesis of the brasilane terpene glycosides brasilane D and E (PubMed:32936132). The biosynthesis starts with the activity of the terpene cyclase braA that converts farnesyl pyrophosphate into the sesquiterpene alcohol trichobrasilenol (PubMed:32936132). Subsequently, trichobrasilenol is glycosylated by the O-glycosyltransferase braB putatively using UDP-GlcNAc as sugar donor to yield brasilane A (PubMed:32936132). The latter then undergoes two rounds of oxidation performed by the cytochrome P450 monooxygenase braC (PubMed:32936132). In the first round braC hydroxylates C-12 forming brasilane D, which serves as substrate in the second round to establish the epoxide at the bond between C-5 and C-10 and oxidize the alcohol at C-12 to an aldehyde leading to the final product brasilane E (PubMed:32936132).</text>
</comment>
<comment type="catalytic activity">
    <reaction evidence="3">
        <text>(2E,6E)-farnesyl diphosphate + H2O = trichobrasilenol + diphosphate</text>
        <dbReference type="Rhea" id="RHEA:66644"/>
        <dbReference type="ChEBI" id="CHEBI:15377"/>
        <dbReference type="ChEBI" id="CHEBI:33019"/>
        <dbReference type="ChEBI" id="CHEBI:167379"/>
        <dbReference type="ChEBI" id="CHEBI:175763"/>
    </reaction>
    <physiologicalReaction direction="left-to-right" evidence="6">
        <dbReference type="Rhea" id="RHEA:66645"/>
    </physiologicalReaction>
</comment>
<comment type="cofactor">
    <cofactor evidence="2">
        <name>Mg(2+)</name>
        <dbReference type="ChEBI" id="CHEBI:18420"/>
    </cofactor>
    <text evidence="2">Binds 3 Mg(2+) ions per monomer.</text>
</comment>
<comment type="pathway">
    <text evidence="3">Secondary metabolite biosynthesis.</text>
</comment>
<comment type="subunit">
    <text evidence="2">Homodimer.</text>
</comment>
<comment type="domain">
    <text evidence="2">The 2 conserved active-site motifs D(D/E)XX(D/E) and NSE are required for coordinating the divalent metal ions that stabilize the PPi moiety of the substrate.</text>
</comment>
<comment type="domain">
    <text evidence="1">The C-terminal WxxxxxRY motif is frequently found in terpene synthases and is important to guide product formation.</text>
</comment>
<comment type="similarity">
    <text evidence="5">Belongs to the terpene synthase family.</text>
</comment>
<protein>
    <recommendedName>
        <fullName evidence="4">Terpene cyclase braA</fullName>
        <ecNumber evidence="3">4.2.3.-</ecNumber>
    </recommendedName>
    <alternativeName>
        <fullName evidence="4">Brasilane terpene glycosides biosynthesis cluster protein A</fullName>
    </alternativeName>
</protein>
<reference key="1">
    <citation type="journal article" date="2020" name="Chem. Commun. (Camb.)">
        <title>Biosynthesis of oxygenated brasilane terpene glycosides involves a promiscuous N-acetylglucosamine transferase.</title>
        <authorList>
            <person name="Feng J."/>
            <person name="Surup F."/>
            <person name="Hauser M."/>
            <person name="Miller A."/>
            <person name="Wennrich J.P."/>
            <person name="Stadler M."/>
            <person name="Cox R.J."/>
            <person name="Kuhnert E."/>
        </authorList>
    </citation>
    <scope>NUCLEOTIDE SEQUENCE [GENOMIC DNA]</scope>
    <scope>FUNCTION</scope>
    <scope>CATALYTIC ACTIVITY</scope>
    <scope>PATHWAY</scope>
    <source>
        <strain>DSM 103480 / CBS 140778</strain>
    </source>
</reference>
<sequence>MAPDIDNIWSSTTDAAESPVDERRILLKRAVGQKILVPSILSLMPAWPSQVHPAVDEVNTEIDKWLPTVNVAEKKKAKHRARGNYAFLTAVYYPYCKETERLVVIAKFLYWIFFWDDEIDTGGELTEDEEGTIQCCEETNKCVDDCLGPNPNYNPPPNSRGTVEMFYPILRDFRAGLGPVSTERLRLELHDYINGVAKQQKVRQGERLPDPWYHFKIRSDDVGVIPSITQNEYAMKFELPEYVRRHEAMEEIVQECTKLTVLLNDVLSLQKEFRDSQLENLVLLFMNRYNLSLQAAVDKVLDLIREHYAICVAAEKRLPWSEDDEKLNDDIREYVRGCQRLATGTAYWSYSCERYFKQTQVNDKWEVLLDLSYVE</sequence>
<proteinExistence type="evidence at protein level"/>
<keyword id="KW-0456">Lyase</keyword>
<keyword id="KW-0460">Magnesium</keyword>
<keyword id="KW-0479">Metal-binding</keyword>
<accession>P9WER0</accession>
<accession>A0A866WKL9</accession>
<gene>
    <name evidence="4" type="primary">braA</name>
</gene>
<feature type="chain" id="PRO_0000453905" description="Terpene cyclase braA">
    <location>
        <begin position="1"/>
        <end position="375"/>
    </location>
</feature>
<feature type="short sequence motif" description="D(D/E)XX(D/E) motif" evidence="2">
    <location>
        <begin position="116"/>
        <end position="120"/>
    </location>
</feature>
<feature type="short sequence motif" description="NSE motif" evidence="1">
    <location>
        <begin position="264"/>
        <end position="272"/>
    </location>
</feature>
<feature type="short sequence motif" description="WxxxxxRY motif" evidence="1">
    <location>
        <begin position="348"/>
        <end position="355"/>
    </location>
</feature>
<feature type="binding site" evidence="2">
    <location>
        <position position="116"/>
    </location>
    <ligand>
        <name>Mg(2+)</name>
        <dbReference type="ChEBI" id="CHEBI:18420"/>
        <label>1</label>
    </ligand>
</feature>
<feature type="binding site" evidence="2">
    <location>
        <position position="116"/>
    </location>
    <ligand>
        <name>Mg(2+)</name>
        <dbReference type="ChEBI" id="CHEBI:18420"/>
        <label>2</label>
    </ligand>
</feature>
<feature type="binding site" evidence="2">
    <location>
        <position position="264"/>
    </location>
    <ligand>
        <name>Mg(2+)</name>
        <dbReference type="ChEBI" id="CHEBI:18420"/>
        <label>3</label>
    </ligand>
</feature>
<feature type="binding site" evidence="2">
    <location>
        <position position="268"/>
    </location>
    <ligand>
        <name>Mg(2+)</name>
        <dbReference type="ChEBI" id="CHEBI:18420"/>
        <label>3</label>
    </ligand>
</feature>
<feature type="binding site" evidence="2">
    <location>
        <position position="354"/>
    </location>
    <ligand>
        <name>(2E,6E)-farnesyl diphosphate</name>
        <dbReference type="ChEBI" id="CHEBI:175763"/>
    </ligand>
</feature>
<feature type="binding site" evidence="2">
    <location>
        <position position="355"/>
    </location>
    <ligand>
        <name>(2E,6E)-farnesyl diphosphate</name>
        <dbReference type="ChEBI" id="CHEBI:175763"/>
    </ligand>
</feature>
<dbReference type="EC" id="4.2.3.-" evidence="3"/>
<dbReference type="EMBL" id="MT383109">
    <property type="protein sequence ID" value="QOE88883.1"/>
    <property type="molecule type" value="Genomic_DNA"/>
</dbReference>
<dbReference type="SMR" id="P9WER0"/>
<dbReference type="GO" id="GO:0046872">
    <property type="term" value="F:metal ion binding"/>
    <property type="evidence" value="ECO:0007669"/>
    <property type="project" value="UniProtKB-KW"/>
</dbReference>
<dbReference type="GO" id="GO:0010333">
    <property type="term" value="F:terpene synthase activity"/>
    <property type="evidence" value="ECO:0007669"/>
    <property type="project" value="InterPro"/>
</dbReference>
<dbReference type="GO" id="GO:0008299">
    <property type="term" value="P:isoprenoid biosynthetic process"/>
    <property type="evidence" value="ECO:0007669"/>
    <property type="project" value="UniProtKB-ARBA"/>
</dbReference>
<dbReference type="Gene3D" id="1.10.600.10">
    <property type="entry name" value="Farnesyl Diphosphate Synthase"/>
    <property type="match status" value="1"/>
</dbReference>
<dbReference type="InterPro" id="IPR008949">
    <property type="entry name" value="Isoprenoid_synthase_dom_sf"/>
</dbReference>
<dbReference type="InterPro" id="IPR034686">
    <property type="entry name" value="Terpene_cyclase-like_2"/>
</dbReference>
<dbReference type="PANTHER" id="PTHR35201:SF4">
    <property type="entry name" value="BETA-PINACENE SYNTHASE-RELATED"/>
    <property type="match status" value="1"/>
</dbReference>
<dbReference type="PANTHER" id="PTHR35201">
    <property type="entry name" value="TERPENE SYNTHASE"/>
    <property type="match status" value="1"/>
</dbReference>
<dbReference type="Pfam" id="PF19086">
    <property type="entry name" value="Terpene_syn_C_2"/>
    <property type="match status" value="1"/>
</dbReference>
<dbReference type="SFLD" id="SFLDS00005">
    <property type="entry name" value="Isoprenoid_Synthase_Type_I"/>
    <property type="match status" value="1"/>
</dbReference>
<dbReference type="SFLD" id="SFLDG01020">
    <property type="entry name" value="Terpene_Cyclase_Like_2"/>
    <property type="match status" value="1"/>
</dbReference>
<dbReference type="SUPFAM" id="SSF48576">
    <property type="entry name" value="Terpenoid synthases"/>
    <property type="match status" value="1"/>
</dbReference>
<evidence type="ECO:0000250" key="1">
    <source>
        <dbReference type="UniProtKB" id="P9WEY7"/>
    </source>
</evidence>
<evidence type="ECO:0000250" key="2">
    <source>
        <dbReference type="UniProtKB" id="Q9UR08"/>
    </source>
</evidence>
<evidence type="ECO:0000269" key="3">
    <source>
    </source>
</evidence>
<evidence type="ECO:0000303" key="4">
    <source>
    </source>
</evidence>
<evidence type="ECO:0000305" key="5"/>
<evidence type="ECO:0000305" key="6">
    <source>
    </source>
</evidence>
<organism>
    <name type="scientific">Annulohypoxylon truncatum</name>
    <name type="common">Hypoxylon truncatum</name>
    <dbReference type="NCBI Taxonomy" id="327061"/>
    <lineage>
        <taxon>Eukaryota</taxon>
        <taxon>Fungi</taxon>
        <taxon>Dikarya</taxon>
        <taxon>Ascomycota</taxon>
        <taxon>Pezizomycotina</taxon>
        <taxon>Sordariomycetes</taxon>
        <taxon>Xylariomycetidae</taxon>
        <taxon>Xylariales</taxon>
        <taxon>Hypoxylaceae</taxon>
        <taxon>Annulohypoxylon</taxon>
    </lineage>
</organism>